<evidence type="ECO:0000250" key="1"/>
<evidence type="ECO:0000255" key="2">
    <source>
        <dbReference type="PROSITE-ProRule" id="PRU00040"/>
    </source>
</evidence>
<evidence type="ECO:0000305" key="3"/>
<proteinExistence type="evidence at transcript level"/>
<comment type="function">
    <text evidence="1">Interferes with one step of hemostasis (modulation of platelet aggregation, or coagulation cascade, for example).</text>
</comment>
<comment type="subunit">
    <text evidence="1">Heterodimer; disulfide-linked.</text>
</comment>
<comment type="subcellular location">
    <subcellularLocation>
        <location evidence="1">Secreted</location>
    </subcellularLocation>
</comment>
<comment type="tissue specificity">
    <text>Expressed by the venom gland.</text>
</comment>
<comment type="miscellaneous">
    <text>Shows greater sequence similarity to the alpha than beta subunits compared to other heterodimer snaclecs.</text>
</comment>
<comment type="similarity">
    <text evidence="3">Belongs to the snaclec family.</text>
</comment>
<name>SLA3_MACLB</name>
<organism>
    <name type="scientific">Macrovipera lebetinus</name>
    <name type="common">Levantine viper</name>
    <name type="synonym">Vipera lebetina</name>
    <dbReference type="NCBI Taxonomy" id="3148341"/>
    <lineage>
        <taxon>Eukaryota</taxon>
        <taxon>Metazoa</taxon>
        <taxon>Chordata</taxon>
        <taxon>Craniata</taxon>
        <taxon>Vertebrata</taxon>
        <taxon>Euteleostomi</taxon>
        <taxon>Lepidosauria</taxon>
        <taxon>Squamata</taxon>
        <taxon>Bifurcata</taxon>
        <taxon>Unidentata</taxon>
        <taxon>Episquamata</taxon>
        <taxon>Toxicofera</taxon>
        <taxon>Serpentes</taxon>
        <taxon>Colubroidea</taxon>
        <taxon>Viperidae</taxon>
        <taxon>Viperinae</taxon>
        <taxon>Macrovipera</taxon>
    </lineage>
</organism>
<keyword id="KW-1015">Disulfide bond</keyword>
<keyword id="KW-1199">Hemostasis impairing toxin</keyword>
<keyword id="KW-0964">Secreted</keyword>
<keyword id="KW-0732">Signal</keyword>
<keyword id="KW-0800">Toxin</keyword>
<reference key="1">
    <citation type="journal article" date="2009" name="Toxicon">
        <title>C-type lectin protein isoforms of Macrovipera lebetina: cDNA cloning and genetic diversity.</title>
        <authorList>
            <person name="Jebali J."/>
            <person name="Bazaa A."/>
            <person name="Sarray S."/>
            <person name="Benhaj K."/>
            <person name="Karboul A."/>
            <person name="El Ayeb M."/>
            <person name="Marrakchi N."/>
            <person name="Gargouri A."/>
        </authorList>
    </citation>
    <scope>NUCLEOTIDE SEQUENCE [MRNA]</scope>
</reference>
<accession>B4XSZ3</accession>
<feature type="signal peptide" evidence="1">
    <location>
        <begin position="1"/>
        <end position="23"/>
    </location>
</feature>
<feature type="chain" id="PRO_0000356319" description="Snaclec A3">
    <location>
        <begin position="24"/>
        <end position="156"/>
    </location>
</feature>
<feature type="domain" description="C-type lectin" evidence="2">
    <location>
        <begin position="34"/>
        <end position="155"/>
    </location>
</feature>
<feature type="disulfide bond" evidence="2">
    <location>
        <begin position="27"/>
        <end position="38"/>
    </location>
</feature>
<feature type="disulfide bond" evidence="2">
    <location>
        <begin position="55"/>
        <end position="154"/>
    </location>
</feature>
<feature type="disulfide bond" description="Interchain" evidence="2">
    <location>
        <position position="106"/>
    </location>
</feature>
<feature type="disulfide bond" evidence="2">
    <location>
        <begin position="129"/>
        <end position="146"/>
    </location>
</feature>
<feature type="non-terminal residue">
    <location>
        <position position="156"/>
    </location>
</feature>
<dbReference type="EMBL" id="EU085455">
    <property type="protein sequence ID" value="ABW82665.1"/>
    <property type="molecule type" value="mRNA"/>
</dbReference>
<dbReference type="SMR" id="B4XSZ3"/>
<dbReference type="GO" id="GO:0005576">
    <property type="term" value="C:extracellular region"/>
    <property type="evidence" value="ECO:0007669"/>
    <property type="project" value="UniProtKB-SubCell"/>
</dbReference>
<dbReference type="GO" id="GO:0090729">
    <property type="term" value="F:toxin activity"/>
    <property type="evidence" value="ECO:0007669"/>
    <property type="project" value="UniProtKB-KW"/>
</dbReference>
<dbReference type="FunFam" id="3.10.100.10:FF:000087">
    <property type="entry name" value="Snaclec rhodocetin subunit delta"/>
    <property type="match status" value="1"/>
</dbReference>
<dbReference type="Gene3D" id="3.10.100.10">
    <property type="entry name" value="Mannose-Binding Protein A, subunit A"/>
    <property type="match status" value="1"/>
</dbReference>
<dbReference type="InterPro" id="IPR001304">
    <property type="entry name" value="C-type_lectin-like"/>
</dbReference>
<dbReference type="InterPro" id="IPR016186">
    <property type="entry name" value="C-type_lectin-like/link_sf"/>
</dbReference>
<dbReference type="InterPro" id="IPR050111">
    <property type="entry name" value="C-type_lectin/snaclec_domain"/>
</dbReference>
<dbReference type="InterPro" id="IPR018378">
    <property type="entry name" value="C-type_lectin_CS"/>
</dbReference>
<dbReference type="InterPro" id="IPR016187">
    <property type="entry name" value="CTDL_fold"/>
</dbReference>
<dbReference type="PANTHER" id="PTHR22803">
    <property type="entry name" value="MANNOSE, PHOSPHOLIPASE, LECTIN RECEPTOR RELATED"/>
    <property type="match status" value="1"/>
</dbReference>
<dbReference type="Pfam" id="PF00059">
    <property type="entry name" value="Lectin_C"/>
    <property type="match status" value="1"/>
</dbReference>
<dbReference type="SMART" id="SM00034">
    <property type="entry name" value="CLECT"/>
    <property type="match status" value="1"/>
</dbReference>
<dbReference type="SUPFAM" id="SSF56436">
    <property type="entry name" value="C-type lectin-like"/>
    <property type="match status" value="1"/>
</dbReference>
<dbReference type="PROSITE" id="PS00615">
    <property type="entry name" value="C_TYPE_LECTIN_1"/>
    <property type="match status" value="1"/>
</dbReference>
<dbReference type="PROSITE" id="PS50041">
    <property type="entry name" value="C_TYPE_LECTIN_2"/>
    <property type="match status" value="1"/>
</dbReference>
<protein>
    <recommendedName>
        <fullName>Snaclec A3</fullName>
    </recommendedName>
    <alternativeName>
        <fullName>C-type lectin A3</fullName>
    </alternativeName>
</protein>
<sequence length="156" mass="17937">MGRSISVSFGLLVVFLSLSGTGADQDCLPGWSSHEGHCYKVFNLDKTWEDAEKFCTEQANSRHLVSIDSKKEANFVAELVSQNIKETRRTDFVWIGLRAEDKRQHCSSEWSDGSSINYQNWIEAESKKCLGLEKQTRYRKWVNLNCGQPYRFTCEI</sequence>